<evidence type="ECO:0000255" key="1">
    <source>
        <dbReference type="HAMAP-Rule" id="MF_00167"/>
    </source>
</evidence>
<protein>
    <recommendedName>
        <fullName evidence="1">Translational regulator CsrA</fullName>
    </recommendedName>
    <alternativeName>
        <fullName evidence="1">Carbon storage regulator</fullName>
    </alternativeName>
</protein>
<keyword id="KW-0010">Activator</keyword>
<keyword id="KW-0963">Cytoplasm</keyword>
<keyword id="KW-1185">Reference proteome</keyword>
<keyword id="KW-0678">Repressor</keyword>
<keyword id="KW-0694">RNA-binding</keyword>
<keyword id="KW-0810">Translation regulation</keyword>
<reference key="1">
    <citation type="journal article" date="2002" name="Nature">
        <title>Comparison of the genomes of two Xanthomonas pathogens with differing host specificities.</title>
        <authorList>
            <person name="da Silva A.C.R."/>
            <person name="Ferro J.A."/>
            <person name="Reinach F.C."/>
            <person name="Farah C.S."/>
            <person name="Furlan L.R."/>
            <person name="Quaggio R.B."/>
            <person name="Monteiro-Vitorello C.B."/>
            <person name="Van Sluys M.A."/>
            <person name="Almeida N.F. Jr."/>
            <person name="Alves L.M.C."/>
            <person name="do Amaral A.M."/>
            <person name="Bertolini M.C."/>
            <person name="Camargo L.E.A."/>
            <person name="Camarotte G."/>
            <person name="Cannavan F."/>
            <person name="Cardozo J."/>
            <person name="Chambergo F."/>
            <person name="Ciapina L.P."/>
            <person name="Cicarelli R.M.B."/>
            <person name="Coutinho L.L."/>
            <person name="Cursino-Santos J.R."/>
            <person name="El-Dorry H."/>
            <person name="Faria J.B."/>
            <person name="Ferreira A.J.S."/>
            <person name="Ferreira R.C.C."/>
            <person name="Ferro M.I.T."/>
            <person name="Formighieri E.F."/>
            <person name="Franco M.C."/>
            <person name="Greggio C.C."/>
            <person name="Gruber A."/>
            <person name="Katsuyama A.M."/>
            <person name="Kishi L.T."/>
            <person name="Leite R.P."/>
            <person name="Lemos E.G.M."/>
            <person name="Lemos M.V.F."/>
            <person name="Locali E.C."/>
            <person name="Machado M.A."/>
            <person name="Madeira A.M.B.N."/>
            <person name="Martinez-Rossi N.M."/>
            <person name="Martins E.C."/>
            <person name="Meidanis J."/>
            <person name="Menck C.F.M."/>
            <person name="Miyaki C.Y."/>
            <person name="Moon D.H."/>
            <person name="Moreira L.M."/>
            <person name="Novo M.T.M."/>
            <person name="Okura V.K."/>
            <person name="Oliveira M.C."/>
            <person name="Oliveira V.R."/>
            <person name="Pereira H.A."/>
            <person name="Rossi A."/>
            <person name="Sena J.A.D."/>
            <person name="Silva C."/>
            <person name="de Souza R.F."/>
            <person name="Spinola L.A.F."/>
            <person name="Takita M.A."/>
            <person name="Tamura R.E."/>
            <person name="Teixeira E.C."/>
            <person name="Tezza R.I.D."/>
            <person name="Trindade dos Santos M."/>
            <person name="Truffi D."/>
            <person name="Tsai S.M."/>
            <person name="White F.F."/>
            <person name="Setubal J.C."/>
            <person name="Kitajima J.P."/>
        </authorList>
    </citation>
    <scope>NUCLEOTIDE SEQUENCE [LARGE SCALE GENOMIC DNA]</scope>
    <source>
        <strain>ATCC 33913 / DSM 3586 / NCPPB 528 / LMG 568 / P 25</strain>
    </source>
</reference>
<feature type="chain" id="PRO_0000177101" description="Translational regulator CsrA">
    <location>
        <begin position="1"/>
        <end position="70"/>
    </location>
</feature>
<proteinExistence type="inferred from homology"/>
<accession>Q8P9W9</accession>
<gene>
    <name evidence="1" type="primary">csrA</name>
    <name type="ordered locus">XCC1725</name>
</gene>
<organism>
    <name type="scientific">Xanthomonas campestris pv. campestris (strain ATCC 33913 / DSM 3586 / NCPPB 528 / LMG 568 / P 25)</name>
    <dbReference type="NCBI Taxonomy" id="190485"/>
    <lineage>
        <taxon>Bacteria</taxon>
        <taxon>Pseudomonadati</taxon>
        <taxon>Pseudomonadota</taxon>
        <taxon>Gammaproteobacteria</taxon>
        <taxon>Lysobacterales</taxon>
        <taxon>Lysobacteraceae</taxon>
        <taxon>Xanthomonas</taxon>
    </lineage>
</organism>
<comment type="function">
    <text evidence="1">A key translational regulator that binds mRNA to regulate translation initiation and/or mRNA stability. Mediates global changes in gene expression, shifting from rapid growth to stress survival by linking envelope stress, the stringent response and the catabolite repression systems. Usually binds in the 5'-UTR; binding at or near the Shine-Dalgarno sequence prevents ribosome-binding, repressing translation, binding elsewhere in the 5'-UTR can activate translation and/or stabilize the mRNA. Its function is antagonized by small RNA(s).</text>
</comment>
<comment type="subunit">
    <text evidence="1">Homodimer; the beta-strands of each monomer intercalate to form a hydrophobic core, while the alpha-helices form wings that extend away from the core.</text>
</comment>
<comment type="subcellular location">
    <subcellularLocation>
        <location evidence="1">Cytoplasm</location>
    </subcellularLocation>
</comment>
<comment type="similarity">
    <text evidence="1">Belongs to the CsrA/RsmA family.</text>
</comment>
<name>CSRA_XANCP</name>
<dbReference type="EMBL" id="AE008922">
    <property type="protein sequence ID" value="AAM41019.1"/>
    <property type="molecule type" value="Genomic_DNA"/>
</dbReference>
<dbReference type="RefSeq" id="NP_637095.1">
    <property type="nucleotide sequence ID" value="NC_003902.1"/>
</dbReference>
<dbReference type="RefSeq" id="WP_011036902.1">
    <property type="nucleotide sequence ID" value="NC_003902.1"/>
</dbReference>
<dbReference type="SMR" id="Q8P9W9"/>
<dbReference type="STRING" id="190485.XCC1725"/>
<dbReference type="EnsemblBacteria" id="AAM41019">
    <property type="protein sequence ID" value="AAM41019"/>
    <property type="gene ID" value="XCC1725"/>
</dbReference>
<dbReference type="KEGG" id="xcc:XCC1725"/>
<dbReference type="PATRIC" id="fig|190485.4.peg.1842"/>
<dbReference type="eggNOG" id="COG1551">
    <property type="taxonomic scope" value="Bacteria"/>
</dbReference>
<dbReference type="HOGENOM" id="CLU_164837_2_1_6"/>
<dbReference type="OrthoDB" id="9809061at2"/>
<dbReference type="Proteomes" id="UP000001010">
    <property type="component" value="Chromosome"/>
</dbReference>
<dbReference type="GO" id="GO:0005829">
    <property type="term" value="C:cytosol"/>
    <property type="evidence" value="ECO:0000318"/>
    <property type="project" value="GO_Central"/>
</dbReference>
<dbReference type="GO" id="GO:0048027">
    <property type="term" value="F:mRNA 5'-UTR binding"/>
    <property type="evidence" value="ECO:0007669"/>
    <property type="project" value="UniProtKB-UniRule"/>
</dbReference>
<dbReference type="GO" id="GO:0006402">
    <property type="term" value="P:mRNA catabolic process"/>
    <property type="evidence" value="ECO:0007669"/>
    <property type="project" value="InterPro"/>
</dbReference>
<dbReference type="GO" id="GO:0045947">
    <property type="term" value="P:negative regulation of translational initiation"/>
    <property type="evidence" value="ECO:0007669"/>
    <property type="project" value="UniProtKB-UniRule"/>
</dbReference>
<dbReference type="GO" id="GO:0045948">
    <property type="term" value="P:positive regulation of translational initiation"/>
    <property type="evidence" value="ECO:0007669"/>
    <property type="project" value="UniProtKB-UniRule"/>
</dbReference>
<dbReference type="GO" id="GO:0006109">
    <property type="term" value="P:regulation of carbohydrate metabolic process"/>
    <property type="evidence" value="ECO:0007669"/>
    <property type="project" value="UniProtKB-UniRule"/>
</dbReference>
<dbReference type="FunFam" id="2.60.40.4380:FF:000001">
    <property type="entry name" value="Translational regulator CsrA"/>
    <property type="match status" value="1"/>
</dbReference>
<dbReference type="Gene3D" id="2.60.40.4380">
    <property type="entry name" value="Translational regulator CsrA"/>
    <property type="match status" value="1"/>
</dbReference>
<dbReference type="HAMAP" id="MF_00167">
    <property type="entry name" value="CsrA"/>
    <property type="match status" value="1"/>
</dbReference>
<dbReference type="InterPro" id="IPR003751">
    <property type="entry name" value="CsrA"/>
</dbReference>
<dbReference type="InterPro" id="IPR036107">
    <property type="entry name" value="CsrA_sf"/>
</dbReference>
<dbReference type="NCBIfam" id="TIGR00202">
    <property type="entry name" value="csrA"/>
    <property type="match status" value="1"/>
</dbReference>
<dbReference type="NCBIfam" id="NF002469">
    <property type="entry name" value="PRK01712.1"/>
    <property type="match status" value="1"/>
</dbReference>
<dbReference type="PANTHER" id="PTHR34984">
    <property type="entry name" value="CARBON STORAGE REGULATOR"/>
    <property type="match status" value="1"/>
</dbReference>
<dbReference type="PANTHER" id="PTHR34984:SF1">
    <property type="entry name" value="CARBON STORAGE REGULATOR"/>
    <property type="match status" value="1"/>
</dbReference>
<dbReference type="Pfam" id="PF02599">
    <property type="entry name" value="CsrA"/>
    <property type="match status" value="1"/>
</dbReference>
<dbReference type="SUPFAM" id="SSF117130">
    <property type="entry name" value="CsrA-like"/>
    <property type="match status" value="1"/>
</dbReference>
<sequence length="70" mass="7680">MLILTRRVGETLMIGDLVTVTVLGVKGNQVRIGIDAPKDVAVHREEIYQRIQRGDEPVASGAHHNDDCSD</sequence>